<feature type="chain" id="PRO_0000186734" description="Tyrosinase">
    <location>
        <begin position="1"/>
        <end position="574"/>
    </location>
</feature>
<feature type="binding site" evidence="1">
    <location>
        <position position="67"/>
    </location>
    <ligand>
        <name>Cu cation</name>
        <dbReference type="ChEBI" id="CHEBI:23378"/>
        <label>A</label>
    </ligand>
</feature>
<feature type="binding site" evidence="1">
    <location>
        <position position="95"/>
    </location>
    <ligand>
        <name>Cu cation</name>
        <dbReference type="ChEBI" id="CHEBI:23378"/>
        <label>A</label>
    </ligand>
</feature>
<feature type="binding site" evidence="1">
    <location>
        <position position="104"/>
    </location>
    <ligand>
        <name>Cu cation</name>
        <dbReference type="ChEBI" id="CHEBI:23378"/>
        <label>A</label>
    </ligand>
</feature>
<feature type="binding site" evidence="1">
    <location>
        <position position="275"/>
    </location>
    <ligand>
        <name>Cu cation</name>
        <dbReference type="ChEBI" id="CHEBI:23378"/>
        <label>B</label>
    </ligand>
</feature>
<feature type="binding site" evidence="1">
    <location>
        <position position="279"/>
    </location>
    <ligand>
        <name>Cu cation</name>
        <dbReference type="ChEBI" id="CHEBI:23378"/>
        <label>B</label>
    </ligand>
</feature>
<feature type="binding site" evidence="1">
    <location>
        <position position="304"/>
    </location>
    <ligand>
        <name>Cu cation</name>
        <dbReference type="ChEBI" id="CHEBI:23378"/>
        <label>B</label>
    </ligand>
</feature>
<feature type="cross-link" description="2'-(S-cysteinyl)-histidine (Cys-His)" evidence="1">
    <location>
        <begin position="93"/>
        <end position="95"/>
    </location>
</feature>
<proteinExistence type="evidence at transcript level"/>
<accession>Q92396</accession>
<evidence type="ECO:0000250" key="1">
    <source>
        <dbReference type="UniProtKB" id="Q9ZP19"/>
    </source>
</evidence>
<evidence type="ECO:0000305" key="2"/>
<sequence>MSTTGNIAITGIPTTAGPDGSFPLRRELRDLQRNYPDHFNLLVLALKDFQALNESVQTSYYQIAGIHGLPYKPWNNVGSNSDWQSTSGFGGYCTHSSILFLTWHRPYLALFEQALYNSIQKIANQFPQGPLRTKYVEAAKTFRMPYFDWASQPPSGSSAFPSAFTAPSLQVVDVDGKTKSTANPIYRFVFHPVNPSPGDFPRQWSRFPTTVRYPNPRTGQSQDNRVAPILANELASLRTNVSLLLLSYTNFDAFSFNRWDPNMTPGEFGSLEDVHNEIHDRTGGGGHMSSLDVSSFDPLFWFHHTNVDRLWAIWQDLNPDNFLTPRPAPYSTFNSTEGESQTKDTPLTPFWDKSATKFWTSEEIKDTTTTFGYAYPETQEWKYRTGSEYQTSIRQAVTTLYGTNVFANFAAANVQARATEHTELIKSLSLAAPPPSAPITAEKPLLITQEMKASPIPEHLQHLAPNNKYPEWVVNIRAQKHGLHGAFRVIVFLGPIDESDPDSWQTEFNTVGRVSVLGRSTQGPTTTKCAKCITDAADELMISGTVPLTSALLQDIVNENTASIACSQRKWCRI</sequence>
<name>TYRO_PODAS</name>
<organism>
    <name type="scientific">Podospora anserina</name>
    <name type="common">Pleurage anserina</name>
    <dbReference type="NCBI Taxonomy" id="2587412"/>
    <lineage>
        <taxon>Eukaryota</taxon>
        <taxon>Fungi</taxon>
        <taxon>Dikarya</taxon>
        <taxon>Ascomycota</taxon>
        <taxon>Pezizomycotina</taxon>
        <taxon>Sordariomycetes</taxon>
        <taxon>Sordariomycetidae</taxon>
        <taxon>Sordariales</taxon>
        <taxon>Podosporaceae</taxon>
        <taxon>Podospora</taxon>
    </lineage>
</organism>
<comment type="function">
    <text>This is a copper-containing oxidase that functions in the formation of pigments such as melanins and other polyphenolic compounds.</text>
</comment>
<comment type="catalytic activity">
    <reaction>
        <text>2 L-dopa + O2 = 2 L-dopaquinone + 2 H2O</text>
        <dbReference type="Rhea" id="RHEA:34287"/>
        <dbReference type="ChEBI" id="CHEBI:15377"/>
        <dbReference type="ChEBI" id="CHEBI:15379"/>
        <dbReference type="ChEBI" id="CHEBI:57504"/>
        <dbReference type="ChEBI" id="CHEBI:57924"/>
        <dbReference type="EC" id="1.14.18.1"/>
    </reaction>
</comment>
<comment type="catalytic activity">
    <reaction>
        <text>L-tyrosine + O2 = L-dopaquinone + H2O</text>
        <dbReference type="Rhea" id="RHEA:18117"/>
        <dbReference type="ChEBI" id="CHEBI:15377"/>
        <dbReference type="ChEBI" id="CHEBI:15379"/>
        <dbReference type="ChEBI" id="CHEBI:57924"/>
        <dbReference type="ChEBI" id="CHEBI:58315"/>
        <dbReference type="EC" id="1.14.18.1"/>
    </reaction>
</comment>
<comment type="cofactor">
    <cofactor evidence="1">
        <name>Cu(2+)</name>
        <dbReference type="ChEBI" id="CHEBI:29036"/>
    </cofactor>
    <text evidence="1">Binds 2 copper ions per subunit.</text>
</comment>
<comment type="similarity">
    <text evidence="2">Belongs to the tyrosinase family.</text>
</comment>
<keyword id="KW-0186">Copper</keyword>
<keyword id="KW-0470">Melanin biosynthesis</keyword>
<keyword id="KW-0479">Metal-binding</keyword>
<keyword id="KW-0503">Monooxygenase</keyword>
<keyword id="KW-0560">Oxidoreductase</keyword>
<keyword id="KW-0883">Thioether bond</keyword>
<reference key="1">
    <citation type="submission" date="1996-09" db="EMBL/GenBank/DDBJ databases">
        <title>Molecular and functional characterization of the tyrosinase gene of the filamentous fungus Podospora anserina.</title>
        <authorList>
            <person name="Marbach K."/>
            <person name="Stahl U."/>
        </authorList>
    </citation>
    <scope>NUCLEOTIDE SEQUENCE [GENOMIC DNA / MRNA]</scope>
    <source>
        <strain>S1</strain>
    </source>
</reference>
<dbReference type="EC" id="1.14.18.1"/>
<dbReference type="EMBL" id="U66808">
    <property type="protein sequence ID" value="AAB07516.1"/>
    <property type="molecule type" value="mRNA"/>
</dbReference>
<dbReference type="EMBL" id="U66807">
    <property type="protein sequence ID" value="AAB07484.1"/>
    <property type="molecule type" value="Genomic_DNA"/>
</dbReference>
<dbReference type="SMR" id="Q92396"/>
<dbReference type="VEuPathDB" id="FungiDB:PODANS_1_5740"/>
<dbReference type="GO" id="GO:0046872">
    <property type="term" value="F:metal ion binding"/>
    <property type="evidence" value="ECO:0007669"/>
    <property type="project" value="UniProtKB-KW"/>
</dbReference>
<dbReference type="GO" id="GO:0004503">
    <property type="term" value="F:tyrosinase activity"/>
    <property type="evidence" value="ECO:0007669"/>
    <property type="project" value="UniProtKB-EC"/>
</dbReference>
<dbReference type="GO" id="GO:0042438">
    <property type="term" value="P:melanin biosynthetic process"/>
    <property type="evidence" value="ECO:0007669"/>
    <property type="project" value="UniProtKB-KW"/>
</dbReference>
<dbReference type="Gene3D" id="2.60.310.20">
    <property type="match status" value="1"/>
</dbReference>
<dbReference type="Gene3D" id="1.10.1280.10">
    <property type="entry name" value="Di-copper center containing domain from catechol oxidase"/>
    <property type="match status" value="1"/>
</dbReference>
<dbReference type="InterPro" id="IPR008922">
    <property type="entry name" value="Di-copper_centre_dom_sf"/>
</dbReference>
<dbReference type="InterPro" id="IPR016216">
    <property type="entry name" value="Monophenol_mOase_fun"/>
</dbReference>
<dbReference type="InterPro" id="IPR050316">
    <property type="entry name" value="Tyrosinase/Hemocyanin"/>
</dbReference>
<dbReference type="InterPro" id="IPR041640">
    <property type="entry name" value="Tyrosinase_C"/>
</dbReference>
<dbReference type="InterPro" id="IPR002227">
    <property type="entry name" value="Tyrosinase_Cu-bd"/>
</dbReference>
<dbReference type="PANTHER" id="PTHR11474:SF76">
    <property type="entry name" value="SHKT DOMAIN-CONTAINING PROTEIN"/>
    <property type="match status" value="1"/>
</dbReference>
<dbReference type="PANTHER" id="PTHR11474">
    <property type="entry name" value="TYROSINASE FAMILY MEMBER"/>
    <property type="match status" value="1"/>
</dbReference>
<dbReference type="Pfam" id="PF00264">
    <property type="entry name" value="Tyrosinase"/>
    <property type="match status" value="1"/>
</dbReference>
<dbReference type="Pfam" id="PF18132">
    <property type="entry name" value="Tyrosinase_C"/>
    <property type="match status" value="1"/>
</dbReference>
<dbReference type="PIRSF" id="PIRSF000340">
    <property type="entry name" value="MPO_fungal"/>
    <property type="match status" value="1"/>
</dbReference>
<dbReference type="PRINTS" id="PR00092">
    <property type="entry name" value="TYROSINASE"/>
</dbReference>
<dbReference type="SUPFAM" id="SSF48056">
    <property type="entry name" value="Di-copper centre-containing domain"/>
    <property type="match status" value="1"/>
</dbReference>
<dbReference type="PROSITE" id="PS00497">
    <property type="entry name" value="TYROSINASE_1"/>
    <property type="match status" value="1"/>
</dbReference>
<dbReference type="PROSITE" id="PS00498">
    <property type="entry name" value="TYROSINASE_2"/>
    <property type="match status" value="1"/>
</dbReference>
<gene>
    <name type="primary">TYR</name>
</gene>
<protein>
    <recommendedName>
        <fullName>Tyrosinase</fullName>
        <ecNumber>1.14.18.1</ecNumber>
    </recommendedName>
    <alternativeName>
        <fullName>Monophenol monooxygenase</fullName>
    </alternativeName>
</protein>